<accession>Q6AFG7</accession>
<feature type="chain" id="PRO_0000102321" description="Lipoyl synthase">
    <location>
        <begin position="1"/>
        <end position="329"/>
    </location>
</feature>
<feature type="domain" description="Radical SAM core" evidence="2">
    <location>
        <begin position="67"/>
        <end position="281"/>
    </location>
</feature>
<feature type="binding site" evidence="1">
    <location>
        <position position="55"/>
    </location>
    <ligand>
        <name>[4Fe-4S] cluster</name>
        <dbReference type="ChEBI" id="CHEBI:49883"/>
        <label>1</label>
    </ligand>
</feature>
<feature type="binding site" evidence="1">
    <location>
        <position position="60"/>
    </location>
    <ligand>
        <name>[4Fe-4S] cluster</name>
        <dbReference type="ChEBI" id="CHEBI:49883"/>
        <label>1</label>
    </ligand>
</feature>
<feature type="binding site" evidence="1">
    <location>
        <position position="66"/>
    </location>
    <ligand>
        <name>[4Fe-4S] cluster</name>
        <dbReference type="ChEBI" id="CHEBI:49883"/>
        <label>1</label>
    </ligand>
</feature>
<feature type="binding site" evidence="1">
    <location>
        <position position="81"/>
    </location>
    <ligand>
        <name>[4Fe-4S] cluster</name>
        <dbReference type="ChEBI" id="CHEBI:49883"/>
        <label>2</label>
        <note>4Fe-4S-S-AdoMet</note>
    </ligand>
</feature>
<feature type="binding site" evidence="1">
    <location>
        <position position="85"/>
    </location>
    <ligand>
        <name>[4Fe-4S] cluster</name>
        <dbReference type="ChEBI" id="CHEBI:49883"/>
        <label>2</label>
        <note>4Fe-4S-S-AdoMet</note>
    </ligand>
</feature>
<feature type="binding site" evidence="1">
    <location>
        <position position="88"/>
    </location>
    <ligand>
        <name>[4Fe-4S] cluster</name>
        <dbReference type="ChEBI" id="CHEBI:49883"/>
        <label>2</label>
        <note>4Fe-4S-S-AdoMet</note>
    </ligand>
</feature>
<feature type="binding site" evidence="1">
    <location>
        <position position="292"/>
    </location>
    <ligand>
        <name>[4Fe-4S] cluster</name>
        <dbReference type="ChEBI" id="CHEBI:49883"/>
        <label>1</label>
    </ligand>
</feature>
<reference key="1">
    <citation type="journal article" date="2004" name="Mol. Plant Microbe Interact.">
        <title>The genome sequence of the Gram-positive sugarcane pathogen Leifsonia xyli subsp. xyli.</title>
        <authorList>
            <person name="Monteiro-Vitorello C.B."/>
            <person name="Camargo L.E.A."/>
            <person name="Van Sluys M.A."/>
            <person name="Kitajima J.P."/>
            <person name="Truffi D."/>
            <person name="do Amaral A.M."/>
            <person name="Harakava R."/>
            <person name="de Oliveira J.C.F."/>
            <person name="Wood D."/>
            <person name="de Oliveira M.C."/>
            <person name="Miyaki C.Y."/>
            <person name="Takita M.A."/>
            <person name="da Silva A.C.R."/>
            <person name="Furlan L.R."/>
            <person name="Carraro D.M."/>
            <person name="Camarotte G."/>
            <person name="Almeida N.F. Jr."/>
            <person name="Carrer H."/>
            <person name="Coutinho L.L."/>
            <person name="El-Dorry H.A."/>
            <person name="Ferro M.I.T."/>
            <person name="Gagliardi P.R."/>
            <person name="Giglioti E."/>
            <person name="Goldman M.H.S."/>
            <person name="Goldman G.H."/>
            <person name="Kimura E.T."/>
            <person name="Ferro E.S."/>
            <person name="Kuramae E.E."/>
            <person name="Lemos E.G.M."/>
            <person name="Lemos M.V.F."/>
            <person name="Mauro S.M.Z."/>
            <person name="Machado M.A."/>
            <person name="Marino C.L."/>
            <person name="Menck C.F."/>
            <person name="Nunes L.R."/>
            <person name="Oliveira R.C."/>
            <person name="Pereira G.G."/>
            <person name="Siqueira W."/>
            <person name="de Souza A.A."/>
            <person name="Tsai S.M."/>
            <person name="Zanca A.S."/>
            <person name="Simpson A.J.G."/>
            <person name="Brumbley S.M."/>
            <person name="Setubal J.C."/>
        </authorList>
    </citation>
    <scope>NUCLEOTIDE SEQUENCE [LARGE SCALE GENOMIC DNA]</scope>
    <source>
        <strain>CTCB07</strain>
    </source>
</reference>
<organism>
    <name type="scientific">Leifsonia xyli subsp. xyli (strain CTCB07)</name>
    <dbReference type="NCBI Taxonomy" id="281090"/>
    <lineage>
        <taxon>Bacteria</taxon>
        <taxon>Bacillati</taxon>
        <taxon>Actinomycetota</taxon>
        <taxon>Actinomycetes</taxon>
        <taxon>Micrococcales</taxon>
        <taxon>Microbacteriaceae</taxon>
        <taxon>Leifsonia</taxon>
    </lineage>
</organism>
<name>LIPA_LEIXX</name>
<evidence type="ECO:0000255" key="1">
    <source>
        <dbReference type="HAMAP-Rule" id="MF_00206"/>
    </source>
</evidence>
<evidence type="ECO:0000255" key="2">
    <source>
        <dbReference type="PROSITE-ProRule" id="PRU01266"/>
    </source>
</evidence>
<proteinExistence type="inferred from homology"/>
<keyword id="KW-0004">4Fe-4S</keyword>
<keyword id="KW-0963">Cytoplasm</keyword>
<keyword id="KW-0408">Iron</keyword>
<keyword id="KW-0411">Iron-sulfur</keyword>
<keyword id="KW-0479">Metal-binding</keyword>
<keyword id="KW-1185">Reference proteome</keyword>
<keyword id="KW-0949">S-adenosyl-L-methionine</keyword>
<keyword id="KW-0808">Transferase</keyword>
<sequence>MSAEPEGRRMLRLEVRNAQTPIERKPEWIKTRATMGPEYRQLHSLVKSEGLHTVCQEAGCPNIYECWEDREATFLIGGSQCTRRCDFCQIDTGKPAEFDRDEPRRVAESVARMGLRYSTVTGVARDDLEDEGAWLYAETIREIHRQSPGTGVEILVPDFSGDPELLGEVFGARPEVFAHNVETVPRIFKRIRPAFRYERSLDVIAQGRAAGLITKSNLILGMGEERQEISQALQDLHDAGTDIITITQYLRPSPRHLPVARWVRPDEFVELRDEAEAIGFLGVLAGPLVRSSYRAGRLWAQSMRAKGRTVPEELRHLADASLGFAQAVS</sequence>
<protein>
    <recommendedName>
        <fullName evidence="1">Lipoyl synthase</fullName>
        <ecNumber evidence="1">2.8.1.8</ecNumber>
    </recommendedName>
    <alternativeName>
        <fullName evidence="1">Lip-syn</fullName>
        <shortName evidence="1">LS</shortName>
    </alternativeName>
    <alternativeName>
        <fullName evidence="1">Lipoate synthase</fullName>
    </alternativeName>
    <alternativeName>
        <fullName evidence="1">Lipoic acid synthase</fullName>
    </alternativeName>
    <alternativeName>
        <fullName evidence="1">Sulfur insertion protein LipA</fullName>
    </alternativeName>
</protein>
<comment type="function">
    <text evidence="1">Catalyzes the radical-mediated insertion of two sulfur atoms into the C-6 and C-8 positions of the octanoyl moiety bound to the lipoyl domains of lipoate-dependent enzymes, thereby converting the octanoylated domains into lipoylated derivatives.</text>
</comment>
<comment type="catalytic activity">
    <reaction evidence="1">
        <text>[[Fe-S] cluster scaffold protein carrying a second [4Fe-4S](2+) cluster] + N(6)-octanoyl-L-lysyl-[protein] + 2 oxidized [2Fe-2S]-[ferredoxin] + 2 S-adenosyl-L-methionine + 4 H(+) = [[Fe-S] cluster scaffold protein] + N(6)-[(R)-dihydrolipoyl]-L-lysyl-[protein] + 4 Fe(3+) + 2 hydrogen sulfide + 2 5'-deoxyadenosine + 2 L-methionine + 2 reduced [2Fe-2S]-[ferredoxin]</text>
        <dbReference type="Rhea" id="RHEA:16585"/>
        <dbReference type="Rhea" id="RHEA-COMP:9928"/>
        <dbReference type="Rhea" id="RHEA-COMP:10000"/>
        <dbReference type="Rhea" id="RHEA-COMP:10001"/>
        <dbReference type="Rhea" id="RHEA-COMP:10475"/>
        <dbReference type="Rhea" id="RHEA-COMP:14568"/>
        <dbReference type="Rhea" id="RHEA-COMP:14569"/>
        <dbReference type="ChEBI" id="CHEBI:15378"/>
        <dbReference type="ChEBI" id="CHEBI:17319"/>
        <dbReference type="ChEBI" id="CHEBI:29034"/>
        <dbReference type="ChEBI" id="CHEBI:29919"/>
        <dbReference type="ChEBI" id="CHEBI:33722"/>
        <dbReference type="ChEBI" id="CHEBI:33737"/>
        <dbReference type="ChEBI" id="CHEBI:33738"/>
        <dbReference type="ChEBI" id="CHEBI:57844"/>
        <dbReference type="ChEBI" id="CHEBI:59789"/>
        <dbReference type="ChEBI" id="CHEBI:78809"/>
        <dbReference type="ChEBI" id="CHEBI:83100"/>
        <dbReference type="EC" id="2.8.1.8"/>
    </reaction>
</comment>
<comment type="cofactor">
    <cofactor evidence="1">
        <name>[4Fe-4S] cluster</name>
        <dbReference type="ChEBI" id="CHEBI:49883"/>
    </cofactor>
    <text evidence="1">Binds 2 [4Fe-4S] clusters per subunit. One cluster is coordinated with 3 cysteines and an exchangeable S-adenosyl-L-methionine.</text>
</comment>
<comment type="pathway">
    <text evidence="1">Protein modification; protein lipoylation via endogenous pathway; protein N(6)-(lipoyl)lysine from octanoyl-[acyl-carrier-protein]: step 2/2.</text>
</comment>
<comment type="subcellular location">
    <subcellularLocation>
        <location evidence="1">Cytoplasm</location>
    </subcellularLocation>
</comment>
<comment type="similarity">
    <text evidence="1">Belongs to the radical SAM superfamily. Lipoyl synthase family.</text>
</comment>
<dbReference type="EC" id="2.8.1.8" evidence="1"/>
<dbReference type="EMBL" id="AE016822">
    <property type="protein sequence ID" value="AAT88878.1"/>
    <property type="molecule type" value="Genomic_DNA"/>
</dbReference>
<dbReference type="RefSeq" id="WP_011185874.1">
    <property type="nucleotide sequence ID" value="NC_006087.1"/>
</dbReference>
<dbReference type="SMR" id="Q6AFG7"/>
<dbReference type="STRING" id="281090.Lxx10130"/>
<dbReference type="KEGG" id="lxx:Lxx10130"/>
<dbReference type="eggNOG" id="COG0320">
    <property type="taxonomic scope" value="Bacteria"/>
</dbReference>
<dbReference type="HOGENOM" id="CLU_033144_2_1_11"/>
<dbReference type="UniPathway" id="UPA00538">
    <property type="reaction ID" value="UER00593"/>
</dbReference>
<dbReference type="Proteomes" id="UP000001306">
    <property type="component" value="Chromosome"/>
</dbReference>
<dbReference type="GO" id="GO:0005737">
    <property type="term" value="C:cytoplasm"/>
    <property type="evidence" value="ECO:0007669"/>
    <property type="project" value="UniProtKB-SubCell"/>
</dbReference>
<dbReference type="GO" id="GO:0051539">
    <property type="term" value="F:4 iron, 4 sulfur cluster binding"/>
    <property type="evidence" value="ECO:0007669"/>
    <property type="project" value="UniProtKB-UniRule"/>
</dbReference>
<dbReference type="GO" id="GO:0016992">
    <property type="term" value="F:lipoate synthase activity"/>
    <property type="evidence" value="ECO:0007669"/>
    <property type="project" value="UniProtKB-UniRule"/>
</dbReference>
<dbReference type="GO" id="GO:0046872">
    <property type="term" value="F:metal ion binding"/>
    <property type="evidence" value="ECO:0007669"/>
    <property type="project" value="UniProtKB-KW"/>
</dbReference>
<dbReference type="CDD" id="cd01335">
    <property type="entry name" value="Radical_SAM"/>
    <property type="match status" value="1"/>
</dbReference>
<dbReference type="Gene3D" id="3.20.20.70">
    <property type="entry name" value="Aldolase class I"/>
    <property type="match status" value="1"/>
</dbReference>
<dbReference type="HAMAP" id="MF_00206">
    <property type="entry name" value="Lipoyl_synth"/>
    <property type="match status" value="1"/>
</dbReference>
<dbReference type="InterPro" id="IPR013785">
    <property type="entry name" value="Aldolase_TIM"/>
</dbReference>
<dbReference type="InterPro" id="IPR006638">
    <property type="entry name" value="Elp3/MiaA/NifB-like_rSAM"/>
</dbReference>
<dbReference type="InterPro" id="IPR031691">
    <property type="entry name" value="LIAS_N"/>
</dbReference>
<dbReference type="InterPro" id="IPR003698">
    <property type="entry name" value="Lipoyl_synth"/>
</dbReference>
<dbReference type="InterPro" id="IPR007197">
    <property type="entry name" value="rSAM"/>
</dbReference>
<dbReference type="NCBIfam" id="TIGR00510">
    <property type="entry name" value="lipA"/>
    <property type="match status" value="1"/>
</dbReference>
<dbReference type="NCBIfam" id="NF004019">
    <property type="entry name" value="PRK05481.1"/>
    <property type="match status" value="1"/>
</dbReference>
<dbReference type="NCBIfam" id="NF009544">
    <property type="entry name" value="PRK12928.1"/>
    <property type="match status" value="1"/>
</dbReference>
<dbReference type="PANTHER" id="PTHR10949">
    <property type="entry name" value="LIPOYL SYNTHASE"/>
    <property type="match status" value="1"/>
</dbReference>
<dbReference type="PANTHER" id="PTHR10949:SF0">
    <property type="entry name" value="LIPOYL SYNTHASE, MITOCHONDRIAL"/>
    <property type="match status" value="1"/>
</dbReference>
<dbReference type="Pfam" id="PF16881">
    <property type="entry name" value="LIAS_N"/>
    <property type="match status" value="1"/>
</dbReference>
<dbReference type="Pfam" id="PF04055">
    <property type="entry name" value="Radical_SAM"/>
    <property type="match status" value="1"/>
</dbReference>
<dbReference type="PIRSF" id="PIRSF005963">
    <property type="entry name" value="Lipoyl_synth"/>
    <property type="match status" value="1"/>
</dbReference>
<dbReference type="SFLD" id="SFLDF00271">
    <property type="entry name" value="lipoyl_synthase"/>
    <property type="match status" value="1"/>
</dbReference>
<dbReference type="SFLD" id="SFLDS00029">
    <property type="entry name" value="Radical_SAM"/>
    <property type="match status" value="1"/>
</dbReference>
<dbReference type="SMART" id="SM00729">
    <property type="entry name" value="Elp3"/>
    <property type="match status" value="1"/>
</dbReference>
<dbReference type="SUPFAM" id="SSF102114">
    <property type="entry name" value="Radical SAM enzymes"/>
    <property type="match status" value="1"/>
</dbReference>
<dbReference type="PROSITE" id="PS51918">
    <property type="entry name" value="RADICAL_SAM"/>
    <property type="match status" value="1"/>
</dbReference>
<gene>
    <name evidence="1" type="primary">lipA</name>
    <name type="ordered locus">Lxx10130</name>
</gene>